<keyword id="KW-1015">Disulfide bond</keyword>
<keyword id="KW-0325">Glycoprotein</keyword>
<keyword id="KW-0378">Hydrolase</keyword>
<keyword id="KW-0645">Protease</keyword>
<keyword id="KW-1185">Reference proteome</keyword>
<keyword id="KW-0964">Secreted</keyword>
<keyword id="KW-0720">Serine protease</keyword>
<keyword id="KW-0732">Signal</keyword>
<keyword id="KW-0865">Zymogen</keyword>
<name>KLK3_MACMU</name>
<gene>
    <name type="primary">KLK3</name>
    <name type="synonym">APS</name>
</gene>
<reference key="1">
    <citation type="journal article" date="1993" name="Biochim. Biophys. Acta">
        <title>Characterization of rhesus monkey prostate specific antigen cDNA.</title>
        <authorList>
            <person name="Gauthier E.R."/>
            <person name="Chapdelaine P."/>
            <person name="Tremblay R.R."/>
            <person name="Dube J.Y."/>
        </authorList>
    </citation>
    <scope>NUCLEOTIDE SEQUENCE [MRNA]</scope>
</reference>
<protein>
    <recommendedName>
        <fullName>Prostate-specific antigen</fullName>
        <shortName>PSA</shortName>
        <ecNumber>3.4.21.77</ecNumber>
    </recommendedName>
    <alternativeName>
        <fullName>Kallikrein-3</fullName>
    </alternativeName>
    <alternativeName>
        <fullName>Semenogelase</fullName>
    </alternativeName>
</protein>
<comment type="function">
    <text evidence="1">Hydrolyzes semenogelin-1 thus leading to the liquefaction of the seminal coagulum.</text>
</comment>
<comment type="catalytic activity">
    <reaction>
        <text>Preferential cleavage: -Tyr-|-Xaa-.</text>
        <dbReference type="EC" id="3.4.21.77"/>
    </reaction>
</comment>
<comment type="activity regulation">
    <text evidence="1">Inhibited by SERPINA5. Activity is strongly inhibited by Zn2+, 100 times more abundant in semen than in serum. This inhibition is relieved by exposure to semenogelins, which are avid zinc binders (By similarity).</text>
</comment>
<comment type="subunit">
    <text evidence="1">Forms a heterodimer with SERPINA5.</text>
</comment>
<comment type="subcellular location">
    <subcellularLocation>
        <location evidence="1">Secreted</location>
    </subcellularLocation>
</comment>
<comment type="similarity">
    <text evidence="3">Belongs to the peptidase S1 family. Kallikrein subfamily.</text>
</comment>
<feature type="signal peptide" evidence="2">
    <location>
        <begin position="1"/>
        <end position="18"/>
    </location>
</feature>
<feature type="propeptide" id="PRO_0000027935" description="Activation peptide">
    <location>
        <begin position="19"/>
        <end position="24"/>
    </location>
</feature>
<feature type="chain" id="PRO_0000027936" description="Prostate-specific antigen">
    <location>
        <begin position="25"/>
        <end position="261"/>
    </location>
</feature>
<feature type="domain" description="Peptidase S1" evidence="3">
    <location>
        <begin position="25"/>
        <end position="258"/>
    </location>
</feature>
<feature type="active site" description="Charge relay system" evidence="1">
    <location>
        <position position="65"/>
    </location>
</feature>
<feature type="active site" description="Charge relay system" evidence="1">
    <location>
        <position position="120"/>
    </location>
</feature>
<feature type="active site" description="Charge relay system" evidence="1">
    <location>
        <position position="213"/>
    </location>
</feature>
<feature type="glycosylation site" description="N-linked (GlcNAc...) asparagine" evidence="2">
    <location>
        <position position="102"/>
    </location>
</feature>
<feature type="disulfide bond" evidence="3">
    <location>
        <begin position="31"/>
        <end position="173"/>
    </location>
</feature>
<feature type="disulfide bond" evidence="3">
    <location>
        <begin position="50"/>
        <end position="66"/>
    </location>
</feature>
<feature type="disulfide bond" evidence="3">
    <location>
        <begin position="152"/>
        <end position="219"/>
    </location>
</feature>
<feature type="disulfide bond" evidence="3">
    <location>
        <begin position="184"/>
        <end position="198"/>
    </location>
</feature>
<feature type="disulfide bond" evidence="3">
    <location>
        <begin position="209"/>
        <end position="234"/>
    </location>
</feature>
<accession>P33619</accession>
<proteinExistence type="evidence at transcript level"/>
<organism>
    <name type="scientific">Macaca mulatta</name>
    <name type="common">Rhesus macaque</name>
    <dbReference type="NCBI Taxonomy" id="9544"/>
    <lineage>
        <taxon>Eukaryota</taxon>
        <taxon>Metazoa</taxon>
        <taxon>Chordata</taxon>
        <taxon>Craniata</taxon>
        <taxon>Vertebrata</taxon>
        <taxon>Euteleostomi</taxon>
        <taxon>Mammalia</taxon>
        <taxon>Eutheria</taxon>
        <taxon>Euarchontoglires</taxon>
        <taxon>Primates</taxon>
        <taxon>Haplorrhini</taxon>
        <taxon>Catarrhini</taxon>
        <taxon>Cercopithecidae</taxon>
        <taxon>Cercopithecinae</taxon>
        <taxon>Macaca</taxon>
    </lineage>
</organism>
<dbReference type="EC" id="3.4.21.77"/>
<dbReference type="EMBL" id="X73560">
    <property type="protein sequence ID" value="CAA51957.1"/>
    <property type="molecule type" value="mRNA"/>
</dbReference>
<dbReference type="PIR" id="S35711">
    <property type="entry name" value="S35711"/>
</dbReference>
<dbReference type="RefSeq" id="NP_001036241.1">
    <property type="nucleotide sequence ID" value="NM_001042776.1"/>
</dbReference>
<dbReference type="SMR" id="P33619"/>
<dbReference type="FunCoup" id="P33619">
    <property type="interactions" value="183"/>
</dbReference>
<dbReference type="STRING" id="9544.ENSMMUP00000031500"/>
<dbReference type="MEROPS" id="S01.162"/>
<dbReference type="GlyCosmos" id="P33619">
    <property type="glycosylation" value="1 site, No reported glycans"/>
</dbReference>
<dbReference type="PaxDb" id="9544-ENSMMUP00000031500"/>
<dbReference type="Ensembl" id="ENSMMUT00000038399.3">
    <property type="protein sequence ID" value="ENSMMUP00000031500.2"/>
    <property type="gene ID" value="ENSMMUG00000012841.4"/>
</dbReference>
<dbReference type="GeneID" id="719444"/>
<dbReference type="KEGG" id="mcc:719444"/>
<dbReference type="CTD" id="354"/>
<dbReference type="VEuPathDB" id="HostDB:ENSMMUG00000012841"/>
<dbReference type="eggNOG" id="KOG3627">
    <property type="taxonomic scope" value="Eukaryota"/>
</dbReference>
<dbReference type="GeneTree" id="ENSGT01020000230389"/>
<dbReference type="InParanoid" id="P33619"/>
<dbReference type="OMA" id="IGGRECL"/>
<dbReference type="OrthoDB" id="546450at2759"/>
<dbReference type="BRENDA" id="3.4.21.77">
    <property type="organism ID" value="3126"/>
</dbReference>
<dbReference type="Proteomes" id="UP000006718">
    <property type="component" value="Chromosome 19"/>
</dbReference>
<dbReference type="Bgee" id="ENSMMUG00000012841">
    <property type="expression patterns" value="Expressed in testis and 4 other cell types or tissues"/>
</dbReference>
<dbReference type="ExpressionAtlas" id="P33619">
    <property type="expression patterns" value="baseline"/>
</dbReference>
<dbReference type="GO" id="GO:0005615">
    <property type="term" value="C:extracellular space"/>
    <property type="evidence" value="ECO:0000318"/>
    <property type="project" value="GO_Central"/>
</dbReference>
<dbReference type="GO" id="GO:0032991">
    <property type="term" value="C:protein-containing complex"/>
    <property type="evidence" value="ECO:0007669"/>
    <property type="project" value="Ensembl"/>
</dbReference>
<dbReference type="GO" id="GO:0030141">
    <property type="term" value="C:secretory granule"/>
    <property type="evidence" value="ECO:0000318"/>
    <property type="project" value="GO_Central"/>
</dbReference>
<dbReference type="GO" id="GO:0016811">
    <property type="term" value="F:hydrolase activity, acting on carbon-nitrogen (but not peptide) bonds, in linear amides"/>
    <property type="evidence" value="ECO:0007669"/>
    <property type="project" value="Ensembl"/>
</dbReference>
<dbReference type="GO" id="GO:0004252">
    <property type="term" value="F:serine-type endopeptidase activity"/>
    <property type="evidence" value="ECO:0000318"/>
    <property type="project" value="GO_Central"/>
</dbReference>
<dbReference type="GO" id="GO:0002803">
    <property type="term" value="P:positive regulation of antibacterial peptide production"/>
    <property type="evidence" value="ECO:0007669"/>
    <property type="project" value="Ensembl"/>
</dbReference>
<dbReference type="GO" id="GO:0003073">
    <property type="term" value="P:regulation of systemic arterial blood pressure"/>
    <property type="evidence" value="ECO:0000318"/>
    <property type="project" value="GO_Central"/>
</dbReference>
<dbReference type="GO" id="GO:0031638">
    <property type="term" value="P:zymogen activation"/>
    <property type="evidence" value="ECO:0000318"/>
    <property type="project" value="GO_Central"/>
</dbReference>
<dbReference type="CDD" id="cd00190">
    <property type="entry name" value="Tryp_SPc"/>
    <property type="match status" value="1"/>
</dbReference>
<dbReference type="FunFam" id="2.40.10.10:FF:000042">
    <property type="entry name" value="Kallikrein 1-related peptidase C9"/>
    <property type="match status" value="1"/>
</dbReference>
<dbReference type="Gene3D" id="2.40.10.10">
    <property type="entry name" value="Trypsin-like serine proteases"/>
    <property type="match status" value="2"/>
</dbReference>
<dbReference type="InterPro" id="IPR009003">
    <property type="entry name" value="Peptidase_S1_PA"/>
</dbReference>
<dbReference type="InterPro" id="IPR043504">
    <property type="entry name" value="Peptidase_S1_PA_chymotrypsin"/>
</dbReference>
<dbReference type="InterPro" id="IPR001314">
    <property type="entry name" value="Peptidase_S1A"/>
</dbReference>
<dbReference type="InterPro" id="IPR001254">
    <property type="entry name" value="Trypsin_dom"/>
</dbReference>
<dbReference type="InterPro" id="IPR018114">
    <property type="entry name" value="TRYPSIN_HIS"/>
</dbReference>
<dbReference type="InterPro" id="IPR033116">
    <property type="entry name" value="TRYPSIN_SER"/>
</dbReference>
<dbReference type="PANTHER" id="PTHR24271">
    <property type="entry name" value="KALLIKREIN-RELATED"/>
    <property type="match status" value="1"/>
</dbReference>
<dbReference type="PANTHER" id="PTHR24271:SF73">
    <property type="entry name" value="PROSTATE-SPECIFIC ANTIGEN"/>
    <property type="match status" value="1"/>
</dbReference>
<dbReference type="Pfam" id="PF00089">
    <property type="entry name" value="Trypsin"/>
    <property type="match status" value="1"/>
</dbReference>
<dbReference type="PRINTS" id="PR00722">
    <property type="entry name" value="CHYMOTRYPSIN"/>
</dbReference>
<dbReference type="SMART" id="SM00020">
    <property type="entry name" value="Tryp_SPc"/>
    <property type="match status" value="1"/>
</dbReference>
<dbReference type="SUPFAM" id="SSF50494">
    <property type="entry name" value="Trypsin-like serine proteases"/>
    <property type="match status" value="1"/>
</dbReference>
<dbReference type="PROSITE" id="PS50240">
    <property type="entry name" value="TRYPSIN_DOM"/>
    <property type="match status" value="1"/>
</dbReference>
<dbReference type="PROSITE" id="PS00134">
    <property type="entry name" value="TRYPSIN_HIS"/>
    <property type="match status" value="1"/>
</dbReference>
<dbReference type="PROSITE" id="PS00135">
    <property type="entry name" value="TRYPSIN_SER"/>
    <property type="match status" value="1"/>
</dbReference>
<sequence>MWVLVVFLTLSVTWIGAAPLILSRIVGGWECEKHSQPWQVLVASRGRAVCGGVLVHPQWVLTAAHCIRSNSVILLGRHNPYYPEDTGQVFQVSHSFPHPLYNMSLLKNRYLGPGDDSSHDLMLLRLSEPAEITDAVQVLDLPTWEPELGTTCYASGWGSIEPEEHLTPKKLQCVDLHIISNDVCAQVHSQKVTKFMLCAGSWMGGKSTCSGDSGGPLVCDGVLQGITSWGSQPCALPRRPSLYTKVVRYRKWIQDTIMANP</sequence>
<evidence type="ECO:0000250" key="1"/>
<evidence type="ECO:0000255" key="2"/>
<evidence type="ECO:0000255" key="3">
    <source>
        <dbReference type="PROSITE-ProRule" id="PRU00274"/>
    </source>
</evidence>